<name>CWZF5_ORYSJ</name>
<organism>
    <name type="scientific">Oryza sativa subsp. japonica</name>
    <name type="common">Rice</name>
    <dbReference type="NCBI Taxonomy" id="39947"/>
    <lineage>
        <taxon>Eukaryota</taxon>
        <taxon>Viridiplantae</taxon>
        <taxon>Streptophyta</taxon>
        <taxon>Embryophyta</taxon>
        <taxon>Tracheophyta</taxon>
        <taxon>Spermatophyta</taxon>
        <taxon>Magnoliopsida</taxon>
        <taxon>Liliopsida</taxon>
        <taxon>Poales</taxon>
        <taxon>Poaceae</taxon>
        <taxon>BOP clade</taxon>
        <taxon>Oryzoideae</taxon>
        <taxon>Oryzeae</taxon>
        <taxon>Oryzinae</taxon>
        <taxon>Oryza</taxon>
        <taxon>Oryza sativa</taxon>
    </lineage>
</organism>
<feature type="chain" id="PRO_0000450712" description="Cysteine-tryptophan domain-containing zinc finger protein 5">
    <location>
        <begin position="1"/>
        <end position="1510"/>
    </location>
</feature>
<feature type="zinc finger region" description="CW-type" evidence="2">
    <location>
        <begin position="645"/>
        <end position="698"/>
    </location>
</feature>
<feature type="region of interest" description="Disordered" evidence="3">
    <location>
        <begin position="174"/>
        <end position="198"/>
    </location>
</feature>
<feature type="region of interest" description="Disordered" evidence="3">
    <location>
        <begin position="449"/>
        <end position="497"/>
    </location>
</feature>
<feature type="region of interest" description="Disordered" evidence="3">
    <location>
        <begin position="555"/>
        <end position="574"/>
    </location>
</feature>
<feature type="region of interest" description="Disordered" evidence="3">
    <location>
        <begin position="582"/>
        <end position="616"/>
    </location>
</feature>
<feature type="region of interest" description="Disordered" evidence="3">
    <location>
        <begin position="768"/>
        <end position="893"/>
    </location>
</feature>
<feature type="region of interest" description="Disordered" evidence="3">
    <location>
        <begin position="1003"/>
        <end position="1050"/>
    </location>
</feature>
<feature type="region of interest" description="Disordered" evidence="3">
    <location>
        <begin position="1149"/>
        <end position="1194"/>
    </location>
</feature>
<feature type="compositionally biased region" description="Polar residues" evidence="3">
    <location>
        <begin position="174"/>
        <end position="196"/>
    </location>
</feature>
<feature type="compositionally biased region" description="Basic and acidic residues" evidence="3">
    <location>
        <begin position="454"/>
        <end position="465"/>
    </location>
</feature>
<feature type="compositionally biased region" description="Polar residues" evidence="3">
    <location>
        <begin position="467"/>
        <end position="476"/>
    </location>
</feature>
<feature type="compositionally biased region" description="Basic and acidic residues" evidence="3">
    <location>
        <begin position="479"/>
        <end position="497"/>
    </location>
</feature>
<feature type="compositionally biased region" description="Basic and acidic residues" evidence="3">
    <location>
        <begin position="556"/>
        <end position="574"/>
    </location>
</feature>
<feature type="compositionally biased region" description="Basic and acidic residues" evidence="3">
    <location>
        <begin position="768"/>
        <end position="780"/>
    </location>
</feature>
<feature type="compositionally biased region" description="Polar residues" evidence="3">
    <location>
        <begin position="781"/>
        <end position="790"/>
    </location>
</feature>
<feature type="compositionally biased region" description="Basic and acidic residues" evidence="3">
    <location>
        <begin position="874"/>
        <end position="893"/>
    </location>
</feature>
<feature type="compositionally biased region" description="Low complexity" evidence="3">
    <location>
        <begin position="1003"/>
        <end position="1016"/>
    </location>
</feature>
<feature type="compositionally biased region" description="Polar residues" evidence="3">
    <location>
        <begin position="1026"/>
        <end position="1040"/>
    </location>
</feature>
<feature type="compositionally biased region" description="Polar residues" evidence="3">
    <location>
        <begin position="1162"/>
        <end position="1182"/>
    </location>
</feature>
<feature type="binding site" evidence="2">
    <location>
        <position position="654"/>
    </location>
    <ligand>
        <name>Zn(2+)</name>
        <dbReference type="ChEBI" id="CHEBI:29105"/>
    </ligand>
</feature>
<feature type="binding site" evidence="2">
    <location>
        <position position="657"/>
    </location>
    <ligand>
        <name>Zn(2+)</name>
        <dbReference type="ChEBI" id="CHEBI:29105"/>
    </ligand>
</feature>
<feature type="binding site" evidence="2">
    <location>
        <position position="678"/>
    </location>
    <ligand>
        <name>Zn(2+)</name>
        <dbReference type="ChEBI" id="CHEBI:29105"/>
    </ligand>
</feature>
<feature type="binding site" evidence="2">
    <location>
        <position position="690"/>
    </location>
    <ligand>
        <name>Zn(2+)</name>
        <dbReference type="ChEBI" id="CHEBI:29105"/>
    </ligand>
</feature>
<feature type="mutagenesis site" description="Abolishes binding to histone H3K4me1/2/3." evidence="4">
    <original>W</original>
    <variation>A</variation>
    <location>
        <position position="651"/>
    </location>
</feature>
<feature type="mutagenesis site" description="Abolishes binding to histone H3K4me1/2/3." evidence="4">
    <original>W</original>
    <variation>A</variation>
    <location>
        <position position="660"/>
    </location>
</feature>
<feature type="mutagenesis site" description="Abolishes binding to histone H3K4me1/2/3." evidence="4">
    <original>W</original>
    <variation>A</variation>
    <location>
        <position position="676"/>
    </location>
</feature>
<keyword id="KW-0479">Metal-binding</keyword>
<keyword id="KW-0539">Nucleus</keyword>
<keyword id="KW-1185">Reference proteome</keyword>
<keyword id="KW-0804">Transcription</keyword>
<keyword id="KW-0805">Transcription regulation</keyword>
<keyword id="KW-0862">Zinc</keyword>
<keyword id="KW-0863">Zinc-finger</keyword>
<reference key="1">
    <citation type="journal article" date="2005" name="Mol. Genet. Genomics">
        <title>A fine physical map of the rice chromosome 5.</title>
        <authorList>
            <person name="Cheng C.-H."/>
            <person name="Chung M.C."/>
            <person name="Liu S.-M."/>
            <person name="Chen S.-K."/>
            <person name="Kao F.Y."/>
            <person name="Lin S.-J."/>
            <person name="Hsiao S.-H."/>
            <person name="Tseng I.C."/>
            <person name="Hsing Y.-I.C."/>
            <person name="Wu H.-P."/>
            <person name="Chen C.-S."/>
            <person name="Shaw J.-F."/>
            <person name="Wu J."/>
            <person name="Matsumoto T."/>
            <person name="Sasaki T."/>
            <person name="Chen H.-C."/>
            <person name="Chow T.-Y."/>
        </authorList>
    </citation>
    <scope>NUCLEOTIDE SEQUENCE [LARGE SCALE GENOMIC DNA]</scope>
    <source>
        <strain>cv. Nipponbare</strain>
    </source>
</reference>
<reference key="2">
    <citation type="journal article" date="2005" name="Nature">
        <title>The map-based sequence of the rice genome.</title>
        <authorList>
            <consortium name="International rice genome sequencing project (IRGSP)"/>
        </authorList>
    </citation>
    <scope>NUCLEOTIDE SEQUENCE [LARGE SCALE GENOMIC DNA]</scope>
    <source>
        <strain>cv. Nipponbare</strain>
    </source>
</reference>
<reference key="3">
    <citation type="journal article" date="2008" name="Nucleic Acids Res.">
        <title>The rice annotation project database (RAP-DB): 2008 update.</title>
        <authorList>
            <consortium name="The rice annotation project (RAP)"/>
        </authorList>
    </citation>
    <scope>GENOME REANNOTATION</scope>
    <source>
        <strain>cv. Nipponbare</strain>
    </source>
</reference>
<reference key="4">
    <citation type="journal article" date="2013" name="Rice">
        <title>Improvement of the Oryza sativa Nipponbare reference genome using next generation sequence and optical map data.</title>
        <authorList>
            <person name="Kawahara Y."/>
            <person name="de la Bastide M."/>
            <person name="Hamilton J.P."/>
            <person name="Kanamori H."/>
            <person name="McCombie W.R."/>
            <person name="Ouyang S."/>
            <person name="Schwartz D.C."/>
            <person name="Tanaka T."/>
            <person name="Wu J."/>
            <person name="Zhou S."/>
            <person name="Childs K.L."/>
            <person name="Davidson R.M."/>
            <person name="Lin H."/>
            <person name="Quesada-Ocampo L."/>
            <person name="Vaillancourt B."/>
            <person name="Sakai H."/>
            <person name="Lee S.S."/>
            <person name="Kim J."/>
            <person name="Numa H."/>
            <person name="Itoh T."/>
            <person name="Buell C.R."/>
            <person name="Matsumoto T."/>
        </authorList>
    </citation>
    <scope>GENOME REANNOTATION</scope>
    <source>
        <strain>cv. Nipponbare</strain>
    </source>
</reference>
<reference key="5">
    <citation type="journal article" date="2017" name="Plant Sci.">
        <title>Functional characterization of rice CW-domain containing zinc finger proteins involved in histone recognition.</title>
        <authorList>
            <person name="Zhang Z."/>
            <person name="Zhang F."/>
            <person name="Cheng Z.J."/>
            <person name="Liu L.L."/>
            <person name="Lin Q.B."/>
            <person name="Wu F.Q."/>
            <person name="Zhang H."/>
            <person name="Wang J.L."/>
            <person name="Wang J."/>
            <person name="Guo X.P."/>
            <person name="Zhang X."/>
            <person name="Lei C.L."/>
            <person name="Zhao Z.C."/>
            <person name="Zhu S.S."/>
            <person name="Wan J.M."/>
        </authorList>
    </citation>
    <scope>FUNCTION</scope>
    <scope>SUBCELLULAR LOCATION</scope>
    <scope>TISSUE SPECIFICITY</scope>
    <scope>DOMAIN</scope>
    <scope>MUTAGENESIS OF TRP-651; TRP-660 AND TRP-676</scope>
</reference>
<evidence type="ECO:0000250" key="1">
    <source>
        <dbReference type="UniProtKB" id="A0A0P0X9Z7"/>
    </source>
</evidence>
<evidence type="ECO:0000255" key="2">
    <source>
        <dbReference type="PROSITE-ProRule" id="PRU00454"/>
    </source>
</evidence>
<evidence type="ECO:0000256" key="3">
    <source>
        <dbReference type="SAM" id="MobiDB-lite"/>
    </source>
</evidence>
<evidence type="ECO:0000269" key="4">
    <source>
    </source>
</evidence>
<evidence type="ECO:0000303" key="5">
    <source>
    </source>
</evidence>
<evidence type="ECO:0000305" key="6"/>
<evidence type="ECO:0000312" key="7">
    <source>
        <dbReference type="EMBL" id="BAF17268.1"/>
    </source>
</evidence>
<proteinExistence type="evidence at protein level"/>
<comment type="function">
    <text evidence="1 4">Binds to histones H3K4me1, H3K4me2 and H3K4me3 in GST pull-down assay (PubMed:28818372). May facilitate the recruitment of effectors to mediate gene expression (By similarity).</text>
</comment>
<comment type="subcellular location">
    <subcellularLocation>
        <location evidence="4">Nucleus</location>
    </subcellularLocation>
</comment>
<comment type="tissue specificity">
    <text evidence="4">Highly expressed in young panicles (PubMed:28818372). Expressed at low levels in leaf sheaths, nodes, internodes and axillary buds (PubMed:28818372).</text>
</comment>
<comment type="domain">
    <text evidence="4">The CW-type zinc finger domain is not required for nuclear localization.</text>
</comment>
<comment type="sequence caution" evidence="6">
    <conflict type="erroneous gene model prediction">
        <sequence resource="EMBL-CDS" id="BAS93685"/>
    </conflict>
</comment>
<sequence length="1510" mass="165068">MGGGRRGGRREAEEGVAVAGRSRGVAAAAARHEVAGELELASAGGLGGGGGDELVDPDQLTYIHNVFKIDLYSHVLVNLLVTICKDEKLQNILGHFQKEFEGGVSAENLGSQYGGYGSFLPTYQRSPPALSQSGSPAVLPNHGSASRSPYIPLESVQKNHFVKQAIDGRRKNNYCQRTSSENDSNHSQQLLNSGPEQKTAKIRIKVNNKCLERNNAAIYSGLGLDISPSSSIDDSPQWSIEAPESKLFPDESADTIFQIMTCHSVPGGLLLSPLAENVLELRQKSTAVTKKHEAPVYDNDKEELQRNCCHTSSAAPDNNYQLVKKIKLDEQRDHLPEFENSKYRHKNATIMKKGAKPELKDISDEIDSIRAPRCAKTEKHAVGESADFIADTSGRLKEAKNGQFKGKGSTQSSLSIIDVKAANSANDDKHPKGKAKLKVTLVRNAKMESSLDDGFSHKTKSDKCNDQPVTTSSQLQIDPAKKTSLKRDRGKVVCAKDEPSQYKSKELRSLVDAESMGTTTENVAGNSSELLKGKKVSALQASLFGKKLKIKTHKKPNYDTTRKPNGENEGYVLDHRNGSTYLHTEDKSLKTEKESATSGLTDKDFSGGGNDGDHKISPIVVDKSASMPSRCKNETTEASMAVPASEPVDQWVCCDKCETWRLLPYGMNSDTLPKKWRCSMQSWLPGMNNCKLSEGETTNAIRALYVVPIPENNISLDSRCDTATLVRSNDAAIMSDNLGMPEISKSSKKLHAPRNRDGLDCFPKLKEKQKRIESSDKGEKSTVTISSGQTMAKDRMHRKRKTSGADYDNLIASKKLKKVYNEPPKHQPPQFELSKSRPSTKGSLKELPKHTNISPGMGKHALPSSGKQFCDGDNSDRGARASDAGKSDPRDLFIKKNKSKQMQLRQHGPDPRPSDAFAKHVVKEVLSESNAAKEKLGSDLKFLKVDDHEKSAHARGPVTGTNSNAIFSEKEDLIEQHLENIHFQHPLLSESSVRRNICNVQASTAATSSSSKVSSSHKNKPEFQETRTSPVESVSSSPLRTSDKKHLDRHRTNSYAVAEIVHSQESVKTGASCSKEKYGFECGSDHTKPHVSGCSNRVMHQDALEDGDLDKQNILTNGVFNNRSSGLGIRNDQGQPNSLVEQKVNSHVLPIHGSGDFRRPTPDQNGKTLPQYNSNQSDQAKLSSGKHPTQVRPDKGNVEYIDLKTNPSTVAGSKLLPGLNNKVNGNASNKSKQSVVENMKHAAIHVDASTPINASALLKEARDLKHLSDRLKGKGDDLESANICFEACLKFLHVASLKEAAGVDSSKQGDPINTMTLYSDTGNLCGFCAREFERLKKMANAALAYKCVEVAYMKAAFYKHPGAIKDSHALQAASVIAPPAESPSSSASDVDNLNNPSTIAKIVSTRGLCTSQIAKNPISRSNHHLMGLLAYSFSYDPFCLLDKVEDTNYAFEGTRKSQSAFFSYLSGIEKDQADGIALLTEVLNFSFHNVKGLLQLIRHSLECINHERFK</sequence>
<gene>
    <name evidence="5" type="primary">CWZF5</name>
    <name evidence="7" type="ordered locus">Os05g0371100</name>
    <name evidence="6" type="ordered locus">LOC_Os05g30790</name>
</gene>
<protein>
    <recommendedName>
        <fullName evidence="5">Cysteine-tryptophan domain-containing zinc finger protein 5</fullName>
        <shortName evidence="5">OsCW-ZF5</shortName>
    </recommendedName>
</protein>
<accession>Q0DIQ5</accession>
<accession>A0A0P0WLF5</accession>
<dbReference type="EMBL" id="AP008211">
    <property type="protein sequence ID" value="BAF17268.1"/>
    <property type="molecule type" value="Genomic_DNA"/>
</dbReference>
<dbReference type="EMBL" id="AP014961">
    <property type="protein sequence ID" value="BAS93685.1"/>
    <property type="status" value="ALT_SEQ"/>
    <property type="molecule type" value="Genomic_DNA"/>
</dbReference>
<dbReference type="SMR" id="Q0DIQ5"/>
<dbReference type="STRING" id="39947.A0A0P0WLF5"/>
<dbReference type="PaxDb" id="39947-A0A0P0WLF5"/>
<dbReference type="KEGG" id="dosa:Os05g0371100"/>
<dbReference type="eggNOG" id="ENOG502QS65">
    <property type="taxonomic scope" value="Eukaryota"/>
</dbReference>
<dbReference type="HOGENOM" id="CLU_1780541_0_0_1"/>
<dbReference type="InParanoid" id="Q0DIQ5"/>
<dbReference type="Proteomes" id="UP000000763">
    <property type="component" value="Chromosome 5"/>
</dbReference>
<dbReference type="Proteomes" id="UP000059680">
    <property type="component" value="Chromosome 5"/>
</dbReference>
<dbReference type="GO" id="GO:0005634">
    <property type="term" value="C:nucleus"/>
    <property type="evidence" value="ECO:0000314"/>
    <property type="project" value="UniProtKB"/>
</dbReference>
<dbReference type="GO" id="GO:0008270">
    <property type="term" value="F:zinc ion binding"/>
    <property type="evidence" value="ECO:0007669"/>
    <property type="project" value="UniProtKB-KW"/>
</dbReference>
<dbReference type="Gene3D" id="3.30.40.100">
    <property type="match status" value="1"/>
</dbReference>
<dbReference type="InterPro" id="IPR055300">
    <property type="entry name" value="CWZF3/5/7"/>
</dbReference>
<dbReference type="InterPro" id="IPR056406">
    <property type="entry name" value="THD_CWZF3/5/7"/>
</dbReference>
<dbReference type="InterPro" id="IPR011124">
    <property type="entry name" value="Znf_CW"/>
</dbReference>
<dbReference type="PANTHER" id="PTHR46524">
    <property type="entry name" value="CW-TYPE ZINC FINGER"/>
    <property type="match status" value="1"/>
</dbReference>
<dbReference type="PANTHER" id="PTHR46524:SF2">
    <property type="entry name" value="CYSTEINE-TRYPTOPHAN DOMAIN-CONTAINING ZINC FINGER PROTEIN 5"/>
    <property type="match status" value="1"/>
</dbReference>
<dbReference type="Pfam" id="PF24756">
    <property type="entry name" value="THD_CWZF3-5-7"/>
    <property type="match status" value="1"/>
</dbReference>
<dbReference type="Pfam" id="PF07496">
    <property type="entry name" value="zf-CW"/>
    <property type="match status" value="1"/>
</dbReference>
<dbReference type="PROSITE" id="PS51050">
    <property type="entry name" value="ZF_CW"/>
    <property type="match status" value="1"/>
</dbReference>